<sequence length="95" mass="10303">MSVDISTVKRVAHLARIAVSEDDAERMTGELNAILGFVEQLNEVDVEGIEPMTSVTPMKMRMREDKVTDGGIAAAVVANAPVTEDNFFVVPKVVE</sequence>
<proteinExistence type="inferred from homology"/>
<accession>Q2YKL4</accession>
<gene>
    <name evidence="1" type="primary">gatC</name>
    <name type="ordered locus">BAB2_0645</name>
</gene>
<evidence type="ECO:0000255" key="1">
    <source>
        <dbReference type="HAMAP-Rule" id="MF_00122"/>
    </source>
</evidence>
<name>GATC_BRUA2</name>
<organism>
    <name type="scientific">Brucella abortus (strain 2308)</name>
    <dbReference type="NCBI Taxonomy" id="359391"/>
    <lineage>
        <taxon>Bacteria</taxon>
        <taxon>Pseudomonadati</taxon>
        <taxon>Pseudomonadota</taxon>
        <taxon>Alphaproteobacteria</taxon>
        <taxon>Hyphomicrobiales</taxon>
        <taxon>Brucellaceae</taxon>
        <taxon>Brucella/Ochrobactrum group</taxon>
        <taxon>Brucella</taxon>
    </lineage>
</organism>
<reference key="1">
    <citation type="journal article" date="2005" name="Infect. Immun.">
        <title>Whole-genome analyses of speciation events in pathogenic Brucellae.</title>
        <authorList>
            <person name="Chain P.S."/>
            <person name="Comerci D.J."/>
            <person name="Tolmasky M.E."/>
            <person name="Larimer F.W."/>
            <person name="Malfatti S.A."/>
            <person name="Vergez L.M."/>
            <person name="Aguero F."/>
            <person name="Land M.L."/>
            <person name="Ugalde R.A."/>
            <person name="Garcia E."/>
        </authorList>
    </citation>
    <scope>NUCLEOTIDE SEQUENCE [LARGE SCALE GENOMIC DNA]</scope>
    <source>
        <strain>2308</strain>
    </source>
</reference>
<protein>
    <recommendedName>
        <fullName evidence="1">Aspartyl/glutamyl-tRNA(Asn/Gln) amidotransferase subunit C</fullName>
        <shortName evidence="1">Asp/Glu-ADT subunit C</shortName>
        <ecNumber evidence="1">6.3.5.-</ecNumber>
    </recommendedName>
</protein>
<comment type="function">
    <text evidence="1">Allows the formation of correctly charged Asn-tRNA(Asn) or Gln-tRNA(Gln) through the transamidation of misacylated Asp-tRNA(Asn) or Glu-tRNA(Gln) in organisms which lack either or both of asparaginyl-tRNA or glutaminyl-tRNA synthetases. The reaction takes place in the presence of glutamine and ATP through an activated phospho-Asp-tRNA(Asn) or phospho-Glu-tRNA(Gln).</text>
</comment>
<comment type="catalytic activity">
    <reaction evidence="1">
        <text>L-glutamyl-tRNA(Gln) + L-glutamine + ATP + H2O = L-glutaminyl-tRNA(Gln) + L-glutamate + ADP + phosphate + H(+)</text>
        <dbReference type="Rhea" id="RHEA:17521"/>
        <dbReference type="Rhea" id="RHEA-COMP:9681"/>
        <dbReference type="Rhea" id="RHEA-COMP:9684"/>
        <dbReference type="ChEBI" id="CHEBI:15377"/>
        <dbReference type="ChEBI" id="CHEBI:15378"/>
        <dbReference type="ChEBI" id="CHEBI:29985"/>
        <dbReference type="ChEBI" id="CHEBI:30616"/>
        <dbReference type="ChEBI" id="CHEBI:43474"/>
        <dbReference type="ChEBI" id="CHEBI:58359"/>
        <dbReference type="ChEBI" id="CHEBI:78520"/>
        <dbReference type="ChEBI" id="CHEBI:78521"/>
        <dbReference type="ChEBI" id="CHEBI:456216"/>
    </reaction>
</comment>
<comment type="catalytic activity">
    <reaction evidence="1">
        <text>L-aspartyl-tRNA(Asn) + L-glutamine + ATP + H2O = L-asparaginyl-tRNA(Asn) + L-glutamate + ADP + phosphate + 2 H(+)</text>
        <dbReference type="Rhea" id="RHEA:14513"/>
        <dbReference type="Rhea" id="RHEA-COMP:9674"/>
        <dbReference type="Rhea" id="RHEA-COMP:9677"/>
        <dbReference type="ChEBI" id="CHEBI:15377"/>
        <dbReference type="ChEBI" id="CHEBI:15378"/>
        <dbReference type="ChEBI" id="CHEBI:29985"/>
        <dbReference type="ChEBI" id="CHEBI:30616"/>
        <dbReference type="ChEBI" id="CHEBI:43474"/>
        <dbReference type="ChEBI" id="CHEBI:58359"/>
        <dbReference type="ChEBI" id="CHEBI:78515"/>
        <dbReference type="ChEBI" id="CHEBI:78516"/>
        <dbReference type="ChEBI" id="CHEBI:456216"/>
    </reaction>
</comment>
<comment type="subunit">
    <text evidence="1">Heterotrimer of A, B and C subunits.</text>
</comment>
<comment type="similarity">
    <text evidence="1">Belongs to the GatC family.</text>
</comment>
<keyword id="KW-0067">ATP-binding</keyword>
<keyword id="KW-0436">Ligase</keyword>
<keyword id="KW-0547">Nucleotide-binding</keyword>
<keyword id="KW-0648">Protein biosynthesis</keyword>
<keyword id="KW-1185">Reference proteome</keyword>
<feature type="chain" id="PRO_1000016080" description="Aspartyl/glutamyl-tRNA(Asn/Gln) amidotransferase subunit C">
    <location>
        <begin position="1"/>
        <end position="95"/>
    </location>
</feature>
<dbReference type="EC" id="6.3.5.-" evidence="1"/>
<dbReference type="EMBL" id="AM040265">
    <property type="protein sequence ID" value="CAJ12811.1"/>
    <property type="molecule type" value="Genomic_DNA"/>
</dbReference>
<dbReference type="RefSeq" id="WP_002966038.1">
    <property type="nucleotide sequence ID" value="NZ_KN046823.1"/>
</dbReference>
<dbReference type="SMR" id="Q2YKL4"/>
<dbReference type="STRING" id="359391.BAB2_0645"/>
<dbReference type="GeneID" id="97535281"/>
<dbReference type="KEGG" id="bmf:BAB2_0645"/>
<dbReference type="PATRIC" id="fig|359391.11.peg.2827"/>
<dbReference type="HOGENOM" id="CLU_105899_2_0_5"/>
<dbReference type="Proteomes" id="UP000002719">
    <property type="component" value="Chromosome II"/>
</dbReference>
<dbReference type="GO" id="GO:0050566">
    <property type="term" value="F:asparaginyl-tRNA synthase (glutamine-hydrolyzing) activity"/>
    <property type="evidence" value="ECO:0007669"/>
    <property type="project" value="RHEA"/>
</dbReference>
<dbReference type="GO" id="GO:0005524">
    <property type="term" value="F:ATP binding"/>
    <property type="evidence" value="ECO:0007669"/>
    <property type="project" value="UniProtKB-KW"/>
</dbReference>
<dbReference type="GO" id="GO:0050567">
    <property type="term" value="F:glutaminyl-tRNA synthase (glutamine-hydrolyzing) activity"/>
    <property type="evidence" value="ECO:0007669"/>
    <property type="project" value="UniProtKB-UniRule"/>
</dbReference>
<dbReference type="GO" id="GO:0070681">
    <property type="term" value="P:glutaminyl-tRNAGln biosynthesis via transamidation"/>
    <property type="evidence" value="ECO:0007669"/>
    <property type="project" value="TreeGrafter"/>
</dbReference>
<dbReference type="GO" id="GO:0006450">
    <property type="term" value="P:regulation of translational fidelity"/>
    <property type="evidence" value="ECO:0007669"/>
    <property type="project" value="InterPro"/>
</dbReference>
<dbReference type="GO" id="GO:0006412">
    <property type="term" value="P:translation"/>
    <property type="evidence" value="ECO:0007669"/>
    <property type="project" value="UniProtKB-UniRule"/>
</dbReference>
<dbReference type="Gene3D" id="1.10.20.60">
    <property type="entry name" value="Glu-tRNAGln amidotransferase C subunit, N-terminal domain"/>
    <property type="match status" value="1"/>
</dbReference>
<dbReference type="HAMAP" id="MF_00122">
    <property type="entry name" value="GatC"/>
    <property type="match status" value="1"/>
</dbReference>
<dbReference type="InterPro" id="IPR036113">
    <property type="entry name" value="Asp/Glu-ADT_sf_sub_c"/>
</dbReference>
<dbReference type="InterPro" id="IPR003837">
    <property type="entry name" value="GatC"/>
</dbReference>
<dbReference type="NCBIfam" id="TIGR00135">
    <property type="entry name" value="gatC"/>
    <property type="match status" value="1"/>
</dbReference>
<dbReference type="PANTHER" id="PTHR15004">
    <property type="entry name" value="GLUTAMYL-TRNA(GLN) AMIDOTRANSFERASE SUBUNIT C, MITOCHONDRIAL"/>
    <property type="match status" value="1"/>
</dbReference>
<dbReference type="PANTHER" id="PTHR15004:SF0">
    <property type="entry name" value="GLUTAMYL-TRNA(GLN) AMIDOTRANSFERASE SUBUNIT C, MITOCHONDRIAL"/>
    <property type="match status" value="1"/>
</dbReference>
<dbReference type="Pfam" id="PF02686">
    <property type="entry name" value="GatC"/>
    <property type="match status" value="1"/>
</dbReference>
<dbReference type="SUPFAM" id="SSF141000">
    <property type="entry name" value="Glu-tRNAGln amidotransferase C subunit"/>
    <property type="match status" value="1"/>
</dbReference>